<feature type="chain" id="PRO_1000001762" description="Phosphate acyltransferase">
    <location>
        <begin position="1"/>
        <end position="348"/>
    </location>
</feature>
<protein>
    <recommendedName>
        <fullName evidence="1">Phosphate acyltransferase</fullName>
        <ecNumber evidence="1">2.3.1.274</ecNumber>
    </recommendedName>
    <alternativeName>
        <fullName evidence="1">Acyl-ACP phosphotransacylase</fullName>
    </alternativeName>
    <alternativeName>
        <fullName evidence="1">Acyl-[acyl-carrier-protein]--phosphate acyltransferase</fullName>
    </alternativeName>
    <alternativeName>
        <fullName evidence="1">Phosphate-acyl-ACP acyltransferase</fullName>
    </alternativeName>
</protein>
<sequence>MGYKISIDAMGGDHGLNTTIPAALEAVKKDSNLQIVLVGDHHKIKRALDRYSKVKKIKLPVLQRIAIHHASETVGMDESPSIAVRKKKDSSMRVAINLVKDRTVDACVSAGNTGALMATSKFVLKTINGVDRPAIVYALPAFNRETKQLSKTYMLDLGANVVCTSEQLFQFAIMGSILAASSKGIAEPRVSLLNIGEEEMKGLDNIKNAAKLLQGCDFINYNGYIEGKYIFDDTTDVIVCDGFVGNVSLKTMEGSLRLIESLIKKTIQESSLLMKIPIVMALPIFKKMKKGMNLDSFNGASLLGLTGIVVKSHGGASANAFETAIYEAIKEIKYNIPKTIQESLEKVL</sequence>
<name>PLSX_FRATH</name>
<keyword id="KW-0963">Cytoplasm</keyword>
<keyword id="KW-0444">Lipid biosynthesis</keyword>
<keyword id="KW-0443">Lipid metabolism</keyword>
<keyword id="KW-0594">Phospholipid biosynthesis</keyword>
<keyword id="KW-1208">Phospholipid metabolism</keyword>
<keyword id="KW-1185">Reference proteome</keyword>
<keyword id="KW-0808">Transferase</keyword>
<evidence type="ECO:0000255" key="1">
    <source>
        <dbReference type="HAMAP-Rule" id="MF_00019"/>
    </source>
</evidence>
<dbReference type="EC" id="2.3.1.274" evidence="1"/>
<dbReference type="EMBL" id="AM233362">
    <property type="protein sequence ID" value="CAJ79581.1"/>
    <property type="molecule type" value="Genomic_DNA"/>
</dbReference>
<dbReference type="RefSeq" id="WP_003016130.1">
    <property type="nucleotide sequence ID" value="NZ_CP009694.1"/>
</dbReference>
<dbReference type="SMR" id="Q2A374"/>
<dbReference type="KEGG" id="ftl:FTL_1142"/>
<dbReference type="UniPathway" id="UPA00085"/>
<dbReference type="Proteomes" id="UP000001944">
    <property type="component" value="Chromosome"/>
</dbReference>
<dbReference type="GO" id="GO:0005737">
    <property type="term" value="C:cytoplasm"/>
    <property type="evidence" value="ECO:0007669"/>
    <property type="project" value="UniProtKB-SubCell"/>
</dbReference>
<dbReference type="GO" id="GO:0043811">
    <property type="term" value="F:phosphate:acyl-[acyl carrier protein] acyltransferase activity"/>
    <property type="evidence" value="ECO:0007669"/>
    <property type="project" value="UniProtKB-UniRule"/>
</dbReference>
<dbReference type="GO" id="GO:0006633">
    <property type="term" value="P:fatty acid biosynthetic process"/>
    <property type="evidence" value="ECO:0007669"/>
    <property type="project" value="UniProtKB-UniRule"/>
</dbReference>
<dbReference type="GO" id="GO:0008654">
    <property type="term" value="P:phospholipid biosynthetic process"/>
    <property type="evidence" value="ECO:0007669"/>
    <property type="project" value="UniProtKB-KW"/>
</dbReference>
<dbReference type="Gene3D" id="3.40.718.10">
    <property type="entry name" value="Isopropylmalate Dehydrogenase"/>
    <property type="match status" value="1"/>
</dbReference>
<dbReference type="HAMAP" id="MF_00019">
    <property type="entry name" value="PlsX"/>
    <property type="match status" value="1"/>
</dbReference>
<dbReference type="InterPro" id="IPR003664">
    <property type="entry name" value="FA_synthesis"/>
</dbReference>
<dbReference type="InterPro" id="IPR012281">
    <property type="entry name" value="Phospholipid_synth_PlsX-like"/>
</dbReference>
<dbReference type="NCBIfam" id="TIGR00182">
    <property type="entry name" value="plsX"/>
    <property type="match status" value="1"/>
</dbReference>
<dbReference type="PANTHER" id="PTHR30100">
    <property type="entry name" value="FATTY ACID/PHOSPHOLIPID SYNTHESIS PROTEIN PLSX"/>
    <property type="match status" value="1"/>
</dbReference>
<dbReference type="PANTHER" id="PTHR30100:SF1">
    <property type="entry name" value="PHOSPHATE ACYLTRANSFERASE"/>
    <property type="match status" value="1"/>
</dbReference>
<dbReference type="Pfam" id="PF02504">
    <property type="entry name" value="FA_synthesis"/>
    <property type="match status" value="1"/>
</dbReference>
<dbReference type="PIRSF" id="PIRSF002465">
    <property type="entry name" value="Phsphlp_syn_PlsX"/>
    <property type="match status" value="1"/>
</dbReference>
<dbReference type="SUPFAM" id="SSF53659">
    <property type="entry name" value="Isocitrate/Isopropylmalate dehydrogenase-like"/>
    <property type="match status" value="1"/>
</dbReference>
<accession>Q2A374</accession>
<reference key="1">
    <citation type="submission" date="2006-03" db="EMBL/GenBank/DDBJ databases">
        <title>Complete genome sequence of Francisella tularensis LVS (Live Vaccine Strain).</title>
        <authorList>
            <person name="Chain P."/>
            <person name="Larimer F."/>
            <person name="Land M."/>
            <person name="Stilwagen S."/>
            <person name="Larsson P."/>
            <person name="Bearden S."/>
            <person name="Chu M."/>
            <person name="Oyston P."/>
            <person name="Forsman M."/>
            <person name="Andersson S."/>
            <person name="Lindler L."/>
            <person name="Titball R."/>
            <person name="Garcia E."/>
        </authorList>
    </citation>
    <scope>NUCLEOTIDE SEQUENCE [LARGE SCALE GENOMIC DNA]</scope>
    <source>
        <strain>LVS</strain>
    </source>
</reference>
<comment type="function">
    <text evidence="1">Catalyzes the reversible formation of acyl-phosphate (acyl-PO(4)) from acyl-[acyl-carrier-protein] (acyl-ACP). This enzyme utilizes acyl-ACP as fatty acyl donor, but not acyl-CoA.</text>
</comment>
<comment type="catalytic activity">
    <reaction evidence="1">
        <text>a fatty acyl-[ACP] + phosphate = an acyl phosphate + holo-[ACP]</text>
        <dbReference type="Rhea" id="RHEA:42292"/>
        <dbReference type="Rhea" id="RHEA-COMP:9685"/>
        <dbReference type="Rhea" id="RHEA-COMP:14125"/>
        <dbReference type="ChEBI" id="CHEBI:43474"/>
        <dbReference type="ChEBI" id="CHEBI:59918"/>
        <dbReference type="ChEBI" id="CHEBI:64479"/>
        <dbReference type="ChEBI" id="CHEBI:138651"/>
        <dbReference type="EC" id="2.3.1.274"/>
    </reaction>
</comment>
<comment type="pathway">
    <text evidence="1">Lipid metabolism; phospholipid metabolism.</text>
</comment>
<comment type="subunit">
    <text evidence="1">Homodimer. Probably interacts with PlsY.</text>
</comment>
<comment type="subcellular location">
    <subcellularLocation>
        <location evidence="1">Cytoplasm</location>
    </subcellularLocation>
    <text evidence="1">Associated with the membrane possibly through PlsY.</text>
</comment>
<comment type="similarity">
    <text evidence="1">Belongs to the PlsX family.</text>
</comment>
<organism>
    <name type="scientific">Francisella tularensis subsp. holarctica (strain LVS)</name>
    <dbReference type="NCBI Taxonomy" id="376619"/>
    <lineage>
        <taxon>Bacteria</taxon>
        <taxon>Pseudomonadati</taxon>
        <taxon>Pseudomonadota</taxon>
        <taxon>Gammaproteobacteria</taxon>
        <taxon>Thiotrichales</taxon>
        <taxon>Francisellaceae</taxon>
        <taxon>Francisella</taxon>
    </lineage>
</organism>
<proteinExistence type="inferred from homology"/>
<gene>
    <name evidence="1" type="primary">plsX</name>
    <name type="ordered locus">FTL_1142</name>
</gene>